<dbReference type="EMBL" id="U12980">
    <property type="protein sequence ID" value="AAC04987.1"/>
    <property type="status" value="ALT_INIT"/>
    <property type="molecule type" value="Genomic_DNA"/>
</dbReference>
<dbReference type="EMBL" id="BK006935">
    <property type="protein sequence ID" value="DAA06942.1"/>
    <property type="molecule type" value="Genomic_DNA"/>
</dbReference>
<dbReference type="PIR" id="S51975">
    <property type="entry name" value="S51975"/>
</dbReference>
<dbReference type="RefSeq" id="NP_009355.3">
    <property type="nucleotide sequence ID" value="NM_001178189.1"/>
</dbReference>
<dbReference type="SMR" id="P39726"/>
<dbReference type="BioGRID" id="31783">
    <property type="interactions" value="104"/>
</dbReference>
<dbReference type="ComplexPortal" id="CPX-1268">
    <property type="entry name" value="Glycine decarboxylase multienzyme complex"/>
</dbReference>
<dbReference type="FunCoup" id="P39726">
    <property type="interactions" value="1118"/>
</dbReference>
<dbReference type="IntAct" id="P39726">
    <property type="interactions" value="5"/>
</dbReference>
<dbReference type="MINT" id="P39726"/>
<dbReference type="STRING" id="4932.YAL044C"/>
<dbReference type="iPTMnet" id="P39726"/>
<dbReference type="PaxDb" id="4932-YAL044C"/>
<dbReference type="PeptideAtlas" id="P39726"/>
<dbReference type="EnsemblFungi" id="YAL044C_mRNA">
    <property type="protein sequence ID" value="YAL044C"/>
    <property type="gene ID" value="YAL044C"/>
</dbReference>
<dbReference type="GeneID" id="851254"/>
<dbReference type="KEGG" id="sce:YAL044C"/>
<dbReference type="AGR" id="SGD:S000000042"/>
<dbReference type="SGD" id="S000000042">
    <property type="gene designation" value="GCV3"/>
</dbReference>
<dbReference type="VEuPathDB" id="FungiDB:YAL044C"/>
<dbReference type="eggNOG" id="KOG3373">
    <property type="taxonomic scope" value="Eukaryota"/>
</dbReference>
<dbReference type="GeneTree" id="ENSGT00390000011666"/>
<dbReference type="HOGENOM" id="CLU_097408_2_0_1"/>
<dbReference type="InParanoid" id="P39726"/>
<dbReference type="OMA" id="KEHEWIR"/>
<dbReference type="OrthoDB" id="10264154at2759"/>
<dbReference type="BioCyc" id="YEAST:G3O-28852-MONOMER"/>
<dbReference type="Reactome" id="R-SCE-6783984">
    <property type="pathway name" value="Glycine degradation"/>
</dbReference>
<dbReference type="Reactome" id="R-SCE-9857492">
    <property type="pathway name" value="Protein lipoylation"/>
</dbReference>
<dbReference type="BioGRID-ORCS" id="851254">
    <property type="hits" value="9 hits in 10 CRISPR screens"/>
</dbReference>
<dbReference type="ChiTaRS" id="GCV3">
    <property type="organism name" value="yeast"/>
</dbReference>
<dbReference type="PRO" id="PR:P39726"/>
<dbReference type="Proteomes" id="UP000002311">
    <property type="component" value="Chromosome I"/>
</dbReference>
<dbReference type="RNAct" id="P39726">
    <property type="molecule type" value="protein"/>
</dbReference>
<dbReference type="GO" id="GO:0005960">
    <property type="term" value="C:glycine cleavage complex"/>
    <property type="evidence" value="ECO:0000315"/>
    <property type="project" value="SGD"/>
</dbReference>
<dbReference type="GO" id="GO:0005739">
    <property type="term" value="C:mitochondrion"/>
    <property type="evidence" value="ECO:0000314"/>
    <property type="project" value="SGD"/>
</dbReference>
<dbReference type="GO" id="GO:0031405">
    <property type="term" value="F:lipoic acid binding"/>
    <property type="evidence" value="ECO:0000314"/>
    <property type="project" value="SGD"/>
</dbReference>
<dbReference type="GO" id="GO:0006546">
    <property type="term" value="P:glycine catabolic process"/>
    <property type="evidence" value="ECO:0000315"/>
    <property type="project" value="SGD"/>
</dbReference>
<dbReference type="GO" id="GO:0019464">
    <property type="term" value="P:glycine decarboxylation via glycine cleavage system"/>
    <property type="evidence" value="ECO:0000318"/>
    <property type="project" value="GO_Central"/>
</dbReference>
<dbReference type="GO" id="GO:0006730">
    <property type="term" value="P:one-carbon metabolic process"/>
    <property type="evidence" value="ECO:0000316"/>
    <property type="project" value="SGD"/>
</dbReference>
<dbReference type="CDD" id="cd06848">
    <property type="entry name" value="GCS_H"/>
    <property type="match status" value="1"/>
</dbReference>
<dbReference type="FunFam" id="2.40.50.100:FF:000066">
    <property type="entry name" value="Glycine cleavage system H protein"/>
    <property type="match status" value="1"/>
</dbReference>
<dbReference type="Gene3D" id="2.40.50.100">
    <property type="match status" value="1"/>
</dbReference>
<dbReference type="HAMAP" id="MF_00272">
    <property type="entry name" value="GcvH"/>
    <property type="match status" value="1"/>
</dbReference>
<dbReference type="InterPro" id="IPR003016">
    <property type="entry name" value="2-oxoA_DH_lipoyl-BS"/>
</dbReference>
<dbReference type="InterPro" id="IPR000089">
    <property type="entry name" value="Biotin_lipoyl"/>
</dbReference>
<dbReference type="InterPro" id="IPR002930">
    <property type="entry name" value="GCV_H"/>
</dbReference>
<dbReference type="InterPro" id="IPR033753">
    <property type="entry name" value="GCV_H/Fam206"/>
</dbReference>
<dbReference type="InterPro" id="IPR017453">
    <property type="entry name" value="GCV_H_sub"/>
</dbReference>
<dbReference type="InterPro" id="IPR011053">
    <property type="entry name" value="Single_hybrid_motif"/>
</dbReference>
<dbReference type="NCBIfam" id="TIGR00527">
    <property type="entry name" value="gcvH"/>
    <property type="match status" value="1"/>
</dbReference>
<dbReference type="NCBIfam" id="NF002270">
    <property type="entry name" value="PRK01202.1"/>
    <property type="match status" value="1"/>
</dbReference>
<dbReference type="PANTHER" id="PTHR11715">
    <property type="entry name" value="GLYCINE CLEAVAGE SYSTEM H PROTEIN"/>
    <property type="match status" value="1"/>
</dbReference>
<dbReference type="PANTHER" id="PTHR11715:SF3">
    <property type="entry name" value="GLYCINE CLEAVAGE SYSTEM H PROTEIN-RELATED"/>
    <property type="match status" value="1"/>
</dbReference>
<dbReference type="Pfam" id="PF01597">
    <property type="entry name" value="GCV_H"/>
    <property type="match status" value="1"/>
</dbReference>
<dbReference type="SUPFAM" id="SSF51230">
    <property type="entry name" value="Single hybrid motif"/>
    <property type="match status" value="1"/>
</dbReference>
<dbReference type="PROSITE" id="PS50968">
    <property type="entry name" value="BIOTINYL_LIPOYL"/>
    <property type="match status" value="1"/>
</dbReference>
<dbReference type="PROSITE" id="PS00189">
    <property type="entry name" value="LIPOYL"/>
    <property type="match status" value="1"/>
</dbReference>
<feature type="transit peptide" description="Mitochondrion" evidence="2">
    <location>
        <begin position="1"/>
        <end position="47"/>
    </location>
</feature>
<feature type="chain" id="PRO_0000010739" description="Glycine cleavage system H protein, mitochondrial">
    <location>
        <begin position="48"/>
        <end position="170"/>
    </location>
</feature>
<feature type="domain" description="Lipoyl-binding" evidence="3">
    <location>
        <begin position="61"/>
        <end position="143"/>
    </location>
</feature>
<feature type="modified residue" description="N6-lipoyllysine" evidence="1 3">
    <location>
        <position position="102"/>
    </location>
</feature>
<feature type="sequence conflict" description="In Ref. 1; AAC04987." evidence="8" ref="1">
    <original>T</original>
    <variation>A</variation>
    <location>
        <position position="14"/>
    </location>
</feature>
<feature type="sequence conflict" description="In Ref. 1; AAC04987." evidence="8" ref="1">
    <original>A</original>
    <variation>S</variation>
    <location>
        <position position="73"/>
    </location>
</feature>
<feature type="sequence conflict" description="In Ref. 1; AAC04987." evidence="8" ref="1">
    <original>A</original>
    <variation>S</variation>
    <location>
        <position position="90"/>
    </location>
</feature>
<keyword id="KW-0450">Lipoyl</keyword>
<keyword id="KW-0496">Mitochondrion</keyword>
<keyword id="KW-1185">Reference proteome</keyword>
<keyword id="KW-0809">Transit peptide</keyword>
<sequence>MLRTTRLWTTRMPTVSKLFLRNSSGNALNKNKLPFLYSSQGPQAVRYTSQHEWIAVHQDKTAFVGITKYATDALGDATYVELPEVGTEIAQGESLGSIESVKSASEIYQPADGTVEEINTNLEENPGVVNEDPMGDGWLVKMKLGEGVNVEQVEGLMSLEQYEKTLVHDD</sequence>
<evidence type="ECO:0000250" key="1"/>
<evidence type="ECO:0000255" key="2"/>
<evidence type="ECO:0000255" key="3">
    <source>
        <dbReference type="PROSITE-ProRule" id="PRU01066"/>
    </source>
</evidence>
<evidence type="ECO:0000269" key="4">
    <source>
    </source>
</evidence>
<evidence type="ECO:0000269" key="5">
    <source>
    </source>
</evidence>
<evidence type="ECO:0000269" key="6">
    <source>
    </source>
</evidence>
<evidence type="ECO:0000269" key="7">
    <source>
    </source>
</evidence>
<evidence type="ECO:0000305" key="8"/>
<protein>
    <recommendedName>
        <fullName>Glycine cleavage system H protein, mitochondrial</fullName>
    </recommendedName>
    <alternativeName>
        <fullName>Glycine decarboxylase complex subunit H</fullName>
    </alternativeName>
</protein>
<proteinExistence type="evidence at protein level"/>
<organism>
    <name type="scientific">Saccharomyces cerevisiae (strain ATCC 204508 / S288c)</name>
    <name type="common">Baker's yeast</name>
    <dbReference type="NCBI Taxonomy" id="559292"/>
    <lineage>
        <taxon>Eukaryota</taxon>
        <taxon>Fungi</taxon>
        <taxon>Dikarya</taxon>
        <taxon>Ascomycota</taxon>
        <taxon>Saccharomycotina</taxon>
        <taxon>Saccharomycetes</taxon>
        <taxon>Saccharomycetales</taxon>
        <taxon>Saccharomycetaceae</taxon>
        <taxon>Saccharomyces</taxon>
    </lineage>
</organism>
<reference key="1">
    <citation type="journal article" date="1995" name="Proc. Natl. Acad. Sci. U.S.A.">
        <title>The nucleotide sequence of chromosome I from Saccharomyces cerevisiae.</title>
        <authorList>
            <person name="Bussey H."/>
            <person name="Kaback D.B."/>
            <person name="Zhong W.-W."/>
            <person name="Vo D.H."/>
            <person name="Clark M.W."/>
            <person name="Fortin N."/>
            <person name="Hall J."/>
            <person name="Ouellette B.F.F."/>
            <person name="Keng T."/>
            <person name="Barton A.B."/>
            <person name="Su Y."/>
            <person name="Davies C.J."/>
            <person name="Storms R.K."/>
        </authorList>
    </citation>
    <scope>NUCLEOTIDE SEQUENCE [LARGE SCALE GENOMIC DNA]</scope>
    <source>
        <strain>ATCC 204508 / S288c</strain>
    </source>
</reference>
<reference key="2">
    <citation type="journal article" date="2014" name="G3 (Bethesda)">
        <title>The reference genome sequence of Saccharomyces cerevisiae: Then and now.</title>
        <authorList>
            <person name="Engel S.R."/>
            <person name="Dietrich F.S."/>
            <person name="Fisk D.G."/>
            <person name="Binkley G."/>
            <person name="Balakrishnan R."/>
            <person name="Costanzo M.C."/>
            <person name="Dwight S.S."/>
            <person name="Hitz B.C."/>
            <person name="Karra K."/>
            <person name="Nash R.S."/>
            <person name="Weng S."/>
            <person name="Wong E.D."/>
            <person name="Lloyd P."/>
            <person name="Skrzypek M.S."/>
            <person name="Miyasato S.R."/>
            <person name="Simison M."/>
            <person name="Cherry J.M."/>
        </authorList>
    </citation>
    <scope>GENOME REANNOTATION</scope>
    <scope>SEQUENCE REVISION TO 14; 73 AND 90</scope>
    <source>
        <strain>ATCC 204508 / S288c</strain>
    </source>
</reference>
<reference key="3">
    <citation type="journal article" date="1997" name="J. Biol. Chem.">
        <title>Molecular characterization of GCV3, the Saccharomyces cerevisiae gene coding for the glycine cleavage system hydrogen carrier protein.</title>
        <authorList>
            <person name="Nagarajan L."/>
            <person name="Storms R.K."/>
        </authorList>
    </citation>
    <scope>FUNCTION</scope>
    <scope>INDUCTION</scope>
</reference>
<reference key="4">
    <citation type="journal article" date="2003" name="Nature">
        <title>Sequencing and comparison of yeast species to identify genes and regulatory elements.</title>
        <authorList>
            <person name="Kellis M."/>
            <person name="Patterson N."/>
            <person name="Endrizzi M."/>
            <person name="Birren B.W."/>
            <person name="Lander E.S."/>
        </authorList>
    </citation>
    <scope>IDENTIFICATION OF PROBABLE INITIATION SITE</scope>
</reference>
<reference key="5">
    <citation type="journal article" date="2003" name="Nature">
        <title>Global analysis of protein localization in budding yeast.</title>
        <authorList>
            <person name="Huh W.-K."/>
            <person name="Falvo J.V."/>
            <person name="Gerke L.C."/>
            <person name="Carroll A.S."/>
            <person name="Howson R.W."/>
            <person name="Weissman J.S."/>
            <person name="O'Shea E.K."/>
        </authorList>
    </citation>
    <scope>SUBCELLULAR LOCATION [LARGE SCALE ANALYSIS]</scope>
</reference>
<reference key="6">
    <citation type="journal article" date="2003" name="Nature">
        <title>Global analysis of protein expression in yeast.</title>
        <authorList>
            <person name="Ghaemmaghami S."/>
            <person name="Huh W.-K."/>
            <person name="Bower K."/>
            <person name="Howson R.W."/>
            <person name="Belle A."/>
            <person name="Dephoure N."/>
            <person name="O'Shea E.K."/>
            <person name="Weissman J.S."/>
        </authorList>
    </citation>
    <scope>LEVEL OF PROTEIN EXPRESSION [LARGE SCALE ANALYSIS]</scope>
</reference>
<reference key="7">
    <citation type="journal article" date="2003" name="Proc. Natl. Acad. Sci. U.S.A.">
        <title>The proteome of Saccharomyces cerevisiae mitochondria.</title>
        <authorList>
            <person name="Sickmann A."/>
            <person name="Reinders J."/>
            <person name="Wagner Y."/>
            <person name="Joppich C."/>
            <person name="Zahedi R.P."/>
            <person name="Meyer H.E."/>
            <person name="Schoenfisch B."/>
            <person name="Perschil I."/>
            <person name="Chacinska A."/>
            <person name="Guiard B."/>
            <person name="Rehling P."/>
            <person name="Pfanner N."/>
            <person name="Meisinger C."/>
        </authorList>
    </citation>
    <scope>SUBCELLULAR LOCATION [LARGE SCALE ANALYSIS]</scope>
    <source>
        <strain>ATCC 76625 / YPH499</strain>
    </source>
</reference>
<reference key="8">
    <citation type="journal article" date="2008" name="Mol. Cell. Proteomics">
        <title>A multidimensional chromatography technology for in-depth phosphoproteome analysis.</title>
        <authorList>
            <person name="Albuquerque C.P."/>
            <person name="Smolka M.B."/>
            <person name="Payne S.H."/>
            <person name="Bafna V."/>
            <person name="Eng J."/>
            <person name="Zhou H."/>
        </authorList>
    </citation>
    <scope>IDENTIFICATION BY MASS SPECTROMETRY [LARGE SCALE ANALYSIS]</scope>
</reference>
<gene>
    <name type="primary">GCV3</name>
    <name type="ordered locus">YAL044C</name>
    <name type="ORF">FUN40</name>
</gene>
<comment type="function">
    <text evidence="1 7">The glycine cleavage system (glycine decarboxylase complex) catalyzes the degradation of glycine. The H protein shuttles the methylamine group of glycine from the P protein to the T protein (By similarity).</text>
</comment>
<comment type="cofactor">
    <cofactor evidence="1">
        <name>(R)-lipoate</name>
        <dbReference type="ChEBI" id="CHEBI:83088"/>
    </cofactor>
    <text evidence="1">Binds 1 lipoyl cofactor covalently.</text>
</comment>
<comment type="subunit">
    <text>Component of the glycine decarboxylase complex (GDC), which is composed of four proteins: P, T, L and H.</text>
</comment>
<comment type="subcellular location">
    <subcellularLocation>
        <location evidence="4 6">Mitochondrion</location>
    </subcellularLocation>
</comment>
<comment type="induction">
    <text evidence="7">Induced by glycine and repressed by the C1 metabolic end products.</text>
</comment>
<comment type="miscellaneous">
    <text evidence="5">Present with 3510 molecules/cell in log phase SD medium.</text>
</comment>
<comment type="similarity">
    <text evidence="8">Belongs to the GcvH family.</text>
</comment>
<comment type="sequence caution" evidence="8">
    <conflict type="erroneous initiation">
        <sequence resource="EMBL-CDS" id="AAC04987"/>
    </conflict>
    <text>Extended N-terminus.</text>
</comment>
<name>GCSH_YEAST</name>
<accession>P39726</accession>
<accession>D6VPH2</accession>